<name>SBIR1_ARATH</name>
<organism>
    <name type="scientific">Arabidopsis thaliana</name>
    <name type="common">Mouse-ear cress</name>
    <dbReference type="NCBI Taxonomy" id="3702"/>
    <lineage>
        <taxon>Eukaryota</taxon>
        <taxon>Viridiplantae</taxon>
        <taxon>Streptophyta</taxon>
        <taxon>Embryophyta</taxon>
        <taxon>Tracheophyta</taxon>
        <taxon>Spermatophyta</taxon>
        <taxon>Magnoliopsida</taxon>
        <taxon>eudicotyledons</taxon>
        <taxon>Gunneridae</taxon>
        <taxon>Pentapetalae</taxon>
        <taxon>rosids</taxon>
        <taxon>malvids</taxon>
        <taxon>Brassicales</taxon>
        <taxon>Brassicaceae</taxon>
        <taxon>Camelineae</taxon>
        <taxon>Arabidopsis</taxon>
    </lineage>
</organism>
<sequence length="641" mass="71111">MAVPTGSANLFLRPLILAVLSFLLLSSFVSSVEWLDIDSSDLKALQVIETELGVNSQRSSASDVNPCGRRGVFCERRHSATTGEYVLRVTRLVYRSRSLTGTISPVIGMLSELKELTLSNNQLVNAVPVDILSCKQLEVLDLRKNRFSGQIPGNFSSLSRLRILDLSSNKLSGNLNFLKNLRNLENLSVANNLFSGKIPEQIVSFHNLRFFDFSGNRYLEGPAPVMSSIKLQTSPHQTRHILAETPTSSPTNKPNNSTTSKAPKGAPKPGKLKKKKKKSKKKKVAAWILGFVVGAIGGTISGFVFSVLFKLIIQAIRGSEKPPGPSIFSPLIKKAEDLAFLENEEALASLEIIGRGGCGEVFKAELPGSNGKIIAVKKVIQPPKDADELTDEDSKFLNKKMRQIRSEINTVGHIRHRNLLPLLAHVSRPECHYLVYEYMEKGSLQDILTDVQAGNQELMWPARHKIALGIAAGLEYLHMDHNPRIIHRDLKPANVLLDDDMEARISDFGLAKAMPDAVTHITTSHVAGTVGYIAPEFYQTHKFTDKCDIYSFGVILGILVIGKLPSDEFFQHTDEMSLIKWMRNIITSENPSLAIDPKLMDQGFDEQMLLVLKIACYCTLDDPKQRPNSKDVRTMLSQIKH</sequence>
<reference key="1">
    <citation type="journal article" date="1999" name="Nature">
        <title>Sequence and analysis of chromosome 2 of the plant Arabidopsis thaliana.</title>
        <authorList>
            <person name="Lin X."/>
            <person name="Kaul S."/>
            <person name="Rounsley S.D."/>
            <person name="Shea T.P."/>
            <person name="Benito M.-I."/>
            <person name="Town C.D."/>
            <person name="Fujii C.Y."/>
            <person name="Mason T.M."/>
            <person name="Bowman C.L."/>
            <person name="Barnstead M.E."/>
            <person name="Feldblyum T.V."/>
            <person name="Buell C.R."/>
            <person name="Ketchum K.A."/>
            <person name="Lee J.J."/>
            <person name="Ronning C.M."/>
            <person name="Koo H.L."/>
            <person name="Moffat K.S."/>
            <person name="Cronin L.A."/>
            <person name="Shen M."/>
            <person name="Pai G."/>
            <person name="Van Aken S."/>
            <person name="Umayam L."/>
            <person name="Tallon L.J."/>
            <person name="Gill J.E."/>
            <person name="Adams M.D."/>
            <person name="Carrera A.J."/>
            <person name="Creasy T.H."/>
            <person name="Goodman H.M."/>
            <person name="Somerville C.R."/>
            <person name="Copenhaver G.P."/>
            <person name="Preuss D."/>
            <person name="Nierman W.C."/>
            <person name="White O."/>
            <person name="Eisen J.A."/>
            <person name="Salzberg S.L."/>
            <person name="Fraser C.M."/>
            <person name="Venter J.C."/>
        </authorList>
    </citation>
    <scope>NUCLEOTIDE SEQUENCE [LARGE SCALE GENOMIC DNA]</scope>
    <source>
        <strain>cv. Columbia</strain>
    </source>
</reference>
<reference key="2">
    <citation type="journal article" date="2017" name="Plant J.">
        <title>Araport11: a complete reannotation of the Arabidopsis thaliana reference genome.</title>
        <authorList>
            <person name="Cheng C.Y."/>
            <person name="Krishnakumar V."/>
            <person name="Chan A.P."/>
            <person name="Thibaud-Nissen F."/>
            <person name="Schobel S."/>
            <person name="Town C.D."/>
        </authorList>
    </citation>
    <scope>GENOME REANNOTATION</scope>
    <source>
        <strain>cv. Columbia</strain>
    </source>
</reference>
<reference key="3">
    <citation type="journal article" date="2003" name="Science">
        <title>Empirical analysis of transcriptional activity in the Arabidopsis genome.</title>
        <authorList>
            <person name="Yamada K."/>
            <person name="Lim J."/>
            <person name="Dale J.M."/>
            <person name="Chen H."/>
            <person name="Shinn P."/>
            <person name="Palm C.J."/>
            <person name="Southwick A.M."/>
            <person name="Wu H.C."/>
            <person name="Kim C.J."/>
            <person name="Nguyen M."/>
            <person name="Pham P.K."/>
            <person name="Cheuk R.F."/>
            <person name="Karlin-Newmann G."/>
            <person name="Liu S.X."/>
            <person name="Lam B."/>
            <person name="Sakano H."/>
            <person name="Wu T."/>
            <person name="Yu G."/>
            <person name="Miranda M."/>
            <person name="Quach H.L."/>
            <person name="Tripp M."/>
            <person name="Chang C.H."/>
            <person name="Lee J.M."/>
            <person name="Toriumi M.J."/>
            <person name="Chan M.M."/>
            <person name="Tang C.C."/>
            <person name="Onodera C.S."/>
            <person name="Deng J.M."/>
            <person name="Akiyama K."/>
            <person name="Ansari Y."/>
            <person name="Arakawa T."/>
            <person name="Banh J."/>
            <person name="Banno F."/>
            <person name="Bowser L."/>
            <person name="Brooks S.Y."/>
            <person name="Carninci P."/>
            <person name="Chao Q."/>
            <person name="Choy N."/>
            <person name="Enju A."/>
            <person name="Goldsmith A.D."/>
            <person name="Gurjal M."/>
            <person name="Hansen N.F."/>
            <person name="Hayashizaki Y."/>
            <person name="Johnson-Hopson C."/>
            <person name="Hsuan V.W."/>
            <person name="Iida K."/>
            <person name="Karnes M."/>
            <person name="Khan S."/>
            <person name="Koesema E."/>
            <person name="Ishida J."/>
            <person name="Jiang P.X."/>
            <person name="Jones T."/>
            <person name="Kawai J."/>
            <person name="Kamiya A."/>
            <person name="Meyers C."/>
            <person name="Nakajima M."/>
            <person name="Narusaka M."/>
            <person name="Seki M."/>
            <person name="Sakurai T."/>
            <person name="Satou M."/>
            <person name="Tamse R."/>
            <person name="Vaysberg M."/>
            <person name="Wallender E.K."/>
            <person name="Wong C."/>
            <person name="Yamamura Y."/>
            <person name="Yuan S."/>
            <person name="Shinozaki K."/>
            <person name="Davis R.W."/>
            <person name="Theologis A."/>
            <person name="Ecker J.R."/>
        </authorList>
    </citation>
    <scope>NUCLEOTIDE SEQUENCE [LARGE SCALE MRNA]</scope>
    <source>
        <strain>cv. Columbia</strain>
    </source>
</reference>
<reference key="4">
    <citation type="journal article" date="2010" name="BMC Genomics">
        <title>Genome-wide cloning and sequence analysis of leucine-rich repeat receptor-like protein kinase genes in Arabidopsis thaliana.</title>
        <authorList>
            <person name="Gou X."/>
            <person name="He K."/>
            <person name="Yang H."/>
            <person name="Yuan T."/>
            <person name="Lin H."/>
            <person name="Clouse S.D."/>
            <person name="Li J."/>
        </authorList>
    </citation>
    <scope>NUCLEOTIDE SEQUENCE [LARGE SCALE MRNA]</scope>
    <source>
        <strain>cv. Columbia</strain>
    </source>
</reference>
<reference key="5">
    <citation type="journal article" date="2007" name="Mol. Cell. Proteomics">
        <title>A high content in lipid-modified peripheral proteins and integral receptor kinases features in the arabidopsis plasma membrane proteome.</title>
        <authorList>
            <person name="Marmagne A."/>
            <person name="Ferro M."/>
            <person name="Meinnel T."/>
            <person name="Bruley C."/>
            <person name="Kuhn L."/>
            <person name="Garin J."/>
            <person name="Barbier-Brygoo H."/>
            <person name="Ephritikhine G."/>
        </authorList>
    </citation>
    <scope>IDENTIFICATION BY MASS SPECTROMETRY</scope>
    <scope>SUBCELLULAR LOCATION [LARGE SCALE ANALYSIS]</scope>
</reference>
<reference key="6">
    <citation type="journal article" date="2009" name="Cell Host Microbe">
        <title>Regulation of cell death and innate immunity by two receptor-like kinases in Arabidopsis.</title>
        <authorList>
            <person name="Gao M."/>
            <person name="Wang X."/>
            <person name="Wang D."/>
            <person name="Xu F."/>
            <person name="Ding X."/>
            <person name="Zhang Z."/>
            <person name="Bi D."/>
            <person name="Cheng Y.T."/>
            <person name="Chen S."/>
            <person name="Li X."/>
            <person name="Zhang Y."/>
        </authorList>
    </citation>
    <scope>FUNCTION</scope>
    <scope>DISRUPTION PHENOTYPE</scope>
    <scope>MUTAGENESIS OF VAL-129; SER-329; GLY-356; ARG-417; ASN-455; GLY-557; GLU-575 AND ARG-626</scope>
</reference>
<reference key="7">
    <citation type="journal article" date="2010" name="Development">
        <title>The EVERSHED receptor-like kinase modulates floral organ shedding in Arabidopsis.</title>
        <authorList>
            <person name="Leslie M.E."/>
            <person name="Lewis M.W."/>
            <person name="Youn J.-Y."/>
            <person name="Daniels M.J."/>
            <person name="Liljegren S.J."/>
        </authorList>
    </citation>
    <scope>FUNCTION</scope>
    <scope>DISRUPTION PHENOTYPE</scope>
    <scope>AUTOPHOSPHORYLATION</scope>
    <scope>CATALYTIC ACTIVITY</scope>
    <scope>SUBCELLULAR LOCATION</scope>
    <scope>TISSUE SPECIFICITY</scope>
    <scope>DEVELOPMENTAL STAGE</scope>
    <scope>MUTAGENESIS OF LYS-377 AND GLU-407</scope>
</reference>
<reference key="8">
    <citation type="journal article" date="2011" name="Plant Physiol.">
        <title>CAST AWAY, a membrane-associated receptor-like kinase, inhibits organ abscission in Arabidopsis.</title>
        <authorList>
            <person name="Burr C.A."/>
            <person name="Leslie M.E."/>
            <person name="Orlowski S.K."/>
            <person name="Chen I."/>
            <person name="Wright C.E."/>
            <person name="Daniels M.J."/>
            <person name="Liljegren S.J."/>
        </authorList>
    </citation>
    <scope>INTERACTION WITH CST</scope>
</reference>
<reference key="9">
    <citation type="journal article" date="2014" name="Curr. Opin. Plant Biol.">
        <title>Receptor like proteins associate with SOBIR1-type of adaptors to form bimolecular receptor kinases.</title>
        <authorList>
            <person name="Gust A.A."/>
            <person name="Felix G."/>
        </authorList>
    </citation>
    <scope>REVIEW</scope>
</reference>
<reference key="10">
    <citation type="journal article" date="2014" name="Plant Signal. Behav.">
        <title>Arabidopsis thaliana receptor-like protein AtRLP23 associates with the receptor-like kinase AtSOBIR1.</title>
        <authorList>
            <person name="Bi G."/>
            <person name="Liebrand T.W."/>
            <person name="Cordewener J.H."/>
            <person name="America A.H."/>
            <person name="Xu X."/>
            <person name="Joosten M.H."/>
        </authorList>
    </citation>
    <scope>IDENTIFICATION BY MASS SPECTROMETRY</scope>
    <scope>INTERACTION WITH RLP23</scope>
</reference>
<reference key="11">
    <citation type="journal article" date="2015" name="Nat. Plants">
        <title>An RLP23-SOBIR1-BAK1 complex mediates NLP-triggered immunity.</title>
        <authorList>
            <person name="Albert I."/>
            <person name="Boehm H."/>
            <person name="Albert M."/>
            <person name="Feiler C.E."/>
            <person name="Imkampe J."/>
            <person name="Wallmeroth N."/>
            <person name="Brancato C."/>
            <person name="Raaymakers T.M."/>
            <person name="Oome S."/>
            <person name="Zhang H."/>
            <person name="Krol E."/>
            <person name="Grefen C."/>
            <person name="Gust A.A."/>
            <person name="Chai J."/>
            <person name="Hedrich R."/>
            <person name="Van den Ackerveken G."/>
            <person name="Nuernberger T."/>
        </authorList>
    </citation>
    <scope>FUNCTION</scope>
    <scope>SUBUNIT</scope>
    <scope>COMPONENT OF THE RLP23-SOBIR1-BAK1 COMPLEX</scope>
</reference>
<evidence type="ECO:0000255" key="1"/>
<evidence type="ECO:0000255" key="2">
    <source>
        <dbReference type="PROSITE-ProRule" id="PRU00159"/>
    </source>
</evidence>
<evidence type="ECO:0000255" key="3">
    <source>
        <dbReference type="PROSITE-ProRule" id="PRU10027"/>
    </source>
</evidence>
<evidence type="ECO:0000256" key="4">
    <source>
        <dbReference type="SAM" id="MobiDB-lite"/>
    </source>
</evidence>
<evidence type="ECO:0000269" key="5">
    <source>
    </source>
</evidence>
<evidence type="ECO:0000269" key="6">
    <source>
    </source>
</evidence>
<evidence type="ECO:0000269" key="7">
    <source>
    </source>
</evidence>
<evidence type="ECO:0000269" key="8">
    <source>
    </source>
</evidence>
<evidence type="ECO:0000269" key="9">
    <source>
    </source>
</evidence>
<evidence type="ECO:0000305" key="10"/>
<evidence type="ECO:0000305" key="11">
    <source>
    </source>
</evidence>
<evidence type="ECO:0007829" key="12">
    <source>
        <dbReference type="PDB" id="6R1H"/>
    </source>
</evidence>
<evidence type="ECO:0007829" key="13">
    <source>
        <dbReference type="PDB" id="7CTV"/>
    </source>
</evidence>
<comment type="function">
    <text evidence="5 6 9">Dual specificity kinase acting on both serine/threonine- and tyrosine-containing substrates. Acting as a counterplayer of BIR1, promotes the activation of plant defense and cell death (PubMed:19616764). Component of the RLP23-SOBIR1-BAK1 complex that mediates NLP-triggered immunity (PubMed:27251392). Functions as an inhibitor/regulator of abscission, probably by regulating membrane trafficking during abscission (PubMed:20081191).</text>
</comment>
<comment type="catalytic activity">
    <reaction evidence="6">
        <text>L-seryl-[protein] + ATP = O-phospho-L-seryl-[protein] + ADP + H(+)</text>
        <dbReference type="Rhea" id="RHEA:17989"/>
        <dbReference type="Rhea" id="RHEA-COMP:9863"/>
        <dbReference type="Rhea" id="RHEA-COMP:11604"/>
        <dbReference type="ChEBI" id="CHEBI:15378"/>
        <dbReference type="ChEBI" id="CHEBI:29999"/>
        <dbReference type="ChEBI" id="CHEBI:30616"/>
        <dbReference type="ChEBI" id="CHEBI:83421"/>
        <dbReference type="ChEBI" id="CHEBI:456216"/>
        <dbReference type="EC" id="2.7.11.1"/>
    </reaction>
</comment>
<comment type="catalytic activity">
    <reaction evidence="6">
        <text>L-threonyl-[protein] + ATP = O-phospho-L-threonyl-[protein] + ADP + H(+)</text>
        <dbReference type="Rhea" id="RHEA:46608"/>
        <dbReference type="Rhea" id="RHEA-COMP:11060"/>
        <dbReference type="Rhea" id="RHEA-COMP:11605"/>
        <dbReference type="ChEBI" id="CHEBI:15378"/>
        <dbReference type="ChEBI" id="CHEBI:30013"/>
        <dbReference type="ChEBI" id="CHEBI:30616"/>
        <dbReference type="ChEBI" id="CHEBI:61977"/>
        <dbReference type="ChEBI" id="CHEBI:456216"/>
        <dbReference type="EC" id="2.7.11.1"/>
    </reaction>
</comment>
<comment type="catalytic activity">
    <reaction evidence="3 6">
        <text>L-tyrosyl-[protein] + ATP = O-phospho-L-tyrosyl-[protein] + ADP + H(+)</text>
        <dbReference type="Rhea" id="RHEA:10596"/>
        <dbReference type="Rhea" id="RHEA-COMP:10136"/>
        <dbReference type="Rhea" id="RHEA-COMP:20101"/>
        <dbReference type="ChEBI" id="CHEBI:15378"/>
        <dbReference type="ChEBI" id="CHEBI:30616"/>
        <dbReference type="ChEBI" id="CHEBI:46858"/>
        <dbReference type="ChEBI" id="CHEBI:61978"/>
        <dbReference type="ChEBI" id="CHEBI:456216"/>
        <dbReference type="EC" id="2.7.10.1"/>
    </reaction>
</comment>
<comment type="subunit">
    <text evidence="7 8 9">Interacts with CST (PubMed:21628627). Interacts with RLP23 (PubMed:24525519, PubMed:27251392). Component of a trimeric complex composed of RLP23, SOBIR1 and BAK1. BAK1 is recruited into a pre-formed RLP23-SOBIR1 complex in a ligand-dependent manner (PubMed:27251392).</text>
</comment>
<comment type="interaction">
    <interactant intactId="EBI-16905883">
        <id>Q9SKB2</id>
    </interactant>
    <interactant intactId="EBI-20651385">
        <id>Q9SH71</id>
        <label>At1g64210</label>
    </interactant>
    <organismsDiffer>false</organismsDiffer>
    <experiments>2</experiments>
</comment>
<comment type="interaction">
    <interactant intactId="EBI-16905883">
        <id>Q9SKB2</id>
    </interactant>
    <interactant intactId="EBI-1238661">
        <id>Q9M9C5</id>
        <label>At1g68400</label>
    </interactant>
    <organismsDiffer>false</organismsDiffer>
    <experiments>3</experiments>
</comment>
<comment type="interaction">
    <interactant intactId="EBI-16905883">
        <id>Q9SKB2</id>
    </interactant>
    <interactant intactId="EBI-20651541">
        <id>C0LGJ9</id>
        <label>At2g02780</label>
    </interactant>
    <organismsDiffer>false</organismsDiffer>
    <experiments>2</experiments>
</comment>
<comment type="interaction">
    <interactant intactId="EBI-16905883">
        <id>Q9SKB2</id>
    </interactant>
    <interactant intactId="EBI-20654045">
        <id>A0A1I9LQ53</id>
        <label>At3g50230</label>
    </interactant>
    <organismsDiffer>false</organismsDiffer>
    <experiments>3</experiments>
</comment>
<comment type="interaction">
    <interactant intactId="EBI-16905883">
        <id>Q9SKB2</id>
    </interactant>
    <interactant intactId="EBI-16955262">
        <id>C0LGR9</id>
        <label>At4g31250</label>
    </interactant>
    <organismsDiffer>false</organismsDiffer>
    <experiments>2</experiments>
</comment>
<comment type="interaction">
    <interactant intactId="EBI-16905883">
        <id>Q9SKB2</id>
    </interactant>
    <interactant intactId="EBI-16905069">
        <id>C0LGQ5</id>
        <label>GSO1</label>
    </interactant>
    <organismsDiffer>false</organismsDiffer>
    <experiments>2</experiments>
</comment>
<comment type="interaction">
    <interactant intactId="EBI-16905883">
        <id>Q9SKB2</id>
    </interactant>
    <interactant intactId="EBI-16914444">
        <id>Q9LJY0</id>
        <label>PRK4</label>
    </interactant>
    <organismsDiffer>false</organismsDiffer>
    <experiments>2</experiments>
</comment>
<comment type="interaction">
    <interactant intactId="EBI-16905883">
        <id>Q9SKB2</id>
    </interactant>
    <interactant intactId="EBI-1626936">
        <id>Q9LVI6</id>
        <label>RLK902</label>
    </interactant>
    <organismsDiffer>false</organismsDiffer>
    <experiments>3</experiments>
</comment>
<comment type="subcellular location">
    <subcellularLocation>
        <location evidence="6 11">Cell membrane</location>
        <topology evidence="6 11">Single-pass type I membrane protein</topology>
    </subcellularLocation>
</comment>
<comment type="tissue specificity">
    <text evidence="6">Mostly present in leaves and flowers, with increasing expression in older flowers.</text>
</comment>
<comment type="developmental stage">
    <text evidence="6">Expressed in floral organ abscission zones (AZs) prior to cell separation and subsequent shedding. Also present within the style of developing fruits, at the bases of cauline leaves, and in the stems of the first rosette leaves.</text>
</comment>
<comment type="PTM">
    <text>Autophosphorylated on Ser, Thr and Tyr residues.</text>
</comment>
<comment type="disruption phenotype">
    <text evidence="5 6">Suppresses BIR1 (bir1-1) disruption phenotype. When associated with AGD5/NEV disruption, premature shedding of floral organs and enlarge abscission zones.</text>
</comment>
<comment type="similarity">
    <text evidence="2">Belongs to the protein kinase superfamily. Ser/Thr protein kinase family.</text>
</comment>
<keyword id="KW-0002">3D-structure</keyword>
<keyword id="KW-0067">ATP-binding</keyword>
<keyword id="KW-1003">Cell membrane</keyword>
<keyword id="KW-0325">Glycoprotein</keyword>
<keyword id="KW-0418">Kinase</keyword>
<keyword id="KW-0433">Leucine-rich repeat</keyword>
<keyword id="KW-0472">Membrane</keyword>
<keyword id="KW-0547">Nucleotide-binding</keyword>
<keyword id="KW-0611">Plant defense</keyword>
<keyword id="KW-0675">Receptor</keyword>
<keyword id="KW-1185">Reference proteome</keyword>
<keyword id="KW-0677">Repeat</keyword>
<keyword id="KW-0723">Serine/threonine-protein kinase</keyword>
<keyword id="KW-0732">Signal</keyword>
<keyword id="KW-0808">Transferase</keyword>
<keyword id="KW-0812">Transmembrane</keyword>
<keyword id="KW-1133">Transmembrane helix</keyword>
<keyword id="KW-0829">Tyrosine-protein kinase</keyword>
<dbReference type="EC" id="2.7.10.1"/>
<dbReference type="EC" id="2.7.11.1"/>
<dbReference type="EMBL" id="AC006533">
    <property type="protein sequence ID" value="AAD32284.1"/>
    <property type="molecule type" value="Genomic_DNA"/>
</dbReference>
<dbReference type="EMBL" id="CP002685">
    <property type="protein sequence ID" value="AEC08599.1"/>
    <property type="molecule type" value="Genomic_DNA"/>
</dbReference>
<dbReference type="EMBL" id="AF370596">
    <property type="protein sequence ID" value="AAK43915.1"/>
    <property type="molecule type" value="mRNA"/>
</dbReference>
<dbReference type="EMBL" id="AY058153">
    <property type="protein sequence ID" value="AAL25569.1"/>
    <property type="molecule type" value="mRNA"/>
</dbReference>
<dbReference type="EMBL" id="FJ708707">
    <property type="protein sequence ID" value="ACN59302.1"/>
    <property type="molecule type" value="mRNA"/>
</dbReference>
<dbReference type="PIR" id="C84726">
    <property type="entry name" value="C84726"/>
</dbReference>
<dbReference type="RefSeq" id="NP_180747.1">
    <property type="nucleotide sequence ID" value="NM_128746.3"/>
</dbReference>
<dbReference type="PDB" id="6R1H">
    <property type="method" value="X-ray"/>
    <property type="resolution" value="1.55 A"/>
    <property type="chains" value="A/B=1-270"/>
</dbReference>
<dbReference type="PDB" id="7CTV">
    <property type="method" value="X-ray"/>
    <property type="resolution" value="2.89 A"/>
    <property type="chains" value="A/B=326-640"/>
</dbReference>
<dbReference type="PDB" id="7CTX">
    <property type="method" value="X-ray"/>
    <property type="resolution" value="2.91 A"/>
    <property type="chains" value="A/B=326-640"/>
</dbReference>
<dbReference type="PDBsum" id="6R1H"/>
<dbReference type="PDBsum" id="7CTV"/>
<dbReference type="PDBsum" id="7CTX"/>
<dbReference type="SMR" id="Q9SKB2"/>
<dbReference type="BioGRID" id="3093">
    <property type="interactions" value="64"/>
</dbReference>
<dbReference type="FunCoup" id="Q9SKB2">
    <property type="interactions" value="571"/>
</dbReference>
<dbReference type="IntAct" id="Q9SKB2">
    <property type="interactions" value="62"/>
</dbReference>
<dbReference type="STRING" id="3702.Q9SKB2"/>
<dbReference type="GlyCosmos" id="Q9SKB2">
    <property type="glycosylation" value="3 sites, No reported glycans"/>
</dbReference>
<dbReference type="GlyGen" id="Q9SKB2">
    <property type="glycosylation" value="4 sites"/>
</dbReference>
<dbReference type="iPTMnet" id="Q9SKB2"/>
<dbReference type="SwissPalm" id="Q9SKB2"/>
<dbReference type="PaxDb" id="3702-AT2G31880.1"/>
<dbReference type="ProteomicsDB" id="228132"/>
<dbReference type="EnsemblPlants" id="AT2G31880.1">
    <property type="protein sequence ID" value="AT2G31880.1"/>
    <property type="gene ID" value="AT2G31880"/>
</dbReference>
<dbReference type="GeneID" id="817746"/>
<dbReference type="Gramene" id="AT2G31880.1">
    <property type="protein sequence ID" value="AT2G31880.1"/>
    <property type="gene ID" value="AT2G31880"/>
</dbReference>
<dbReference type="KEGG" id="ath:AT2G31880"/>
<dbReference type="Araport" id="AT2G31880"/>
<dbReference type="TAIR" id="AT2G31880">
    <property type="gene designation" value="SOBIR1"/>
</dbReference>
<dbReference type="eggNOG" id="ENOG502QW02">
    <property type="taxonomic scope" value="Eukaryota"/>
</dbReference>
<dbReference type="HOGENOM" id="CLU_000288_92_6_1"/>
<dbReference type="InParanoid" id="Q9SKB2"/>
<dbReference type="OMA" id="SRPECHY"/>
<dbReference type="OrthoDB" id="4062651at2759"/>
<dbReference type="PhylomeDB" id="Q9SKB2"/>
<dbReference type="PRO" id="PR:Q9SKB2"/>
<dbReference type="Proteomes" id="UP000006548">
    <property type="component" value="Chromosome 2"/>
</dbReference>
<dbReference type="ExpressionAtlas" id="Q9SKB2">
    <property type="expression patterns" value="baseline and differential"/>
</dbReference>
<dbReference type="GO" id="GO:0005777">
    <property type="term" value="C:peroxisome"/>
    <property type="evidence" value="ECO:0007005"/>
    <property type="project" value="TAIR"/>
</dbReference>
<dbReference type="GO" id="GO:0005886">
    <property type="term" value="C:plasma membrane"/>
    <property type="evidence" value="ECO:0007005"/>
    <property type="project" value="TAIR"/>
</dbReference>
<dbReference type="GO" id="GO:0005524">
    <property type="term" value="F:ATP binding"/>
    <property type="evidence" value="ECO:0007669"/>
    <property type="project" value="UniProtKB-KW"/>
</dbReference>
<dbReference type="GO" id="GO:0106310">
    <property type="term" value="F:protein serine kinase activity"/>
    <property type="evidence" value="ECO:0007669"/>
    <property type="project" value="RHEA"/>
</dbReference>
<dbReference type="GO" id="GO:0004674">
    <property type="term" value="F:protein serine/threonine kinase activity"/>
    <property type="evidence" value="ECO:0000314"/>
    <property type="project" value="UniProtKB"/>
</dbReference>
<dbReference type="GO" id="GO:0004713">
    <property type="term" value="F:protein tyrosine kinase activity"/>
    <property type="evidence" value="ECO:0000314"/>
    <property type="project" value="UniProtKB"/>
</dbReference>
<dbReference type="GO" id="GO:0004714">
    <property type="term" value="F:transmembrane receptor protein tyrosine kinase activity"/>
    <property type="evidence" value="ECO:0007669"/>
    <property type="project" value="UniProtKB-EC"/>
</dbReference>
<dbReference type="GO" id="GO:0006952">
    <property type="term" value="P:defense response"/>
    <property type="evidence" value="ECO:0007669"/>
    <property type="project" value="UniProtKB-KW"/>
</dbReference>
<dbReference type="GO" id="GO:0060862">
    <property type="term" value="P:negative regulation of floral organ abscission"/>
    <property type="evidence" value="ECO:0000316"/>
    <property type="project" value="TAIR"/>
</dbReference>
<dbReference type="GO" id="GO:0031349">
    <property type="term" value="P:positive regulation of defense response"/>
    <property type="evidence" value="ECO:0000315"/>
    <property type="project" value="TAIR"/>
</dbReference>
<dbReference type="DisProt" id="DP02660"/>
<dbReference type="FunFam" id="1.10.510.10:FF:000479">
    <property type="entry name" value="Leucine-rich repeat receptor-like protein kinase"/>
    <property type="match status" value="1"/>
</dbReference>
<dbReference type="FunFam" id="3.80.10.10:FF:001031">
    <property type="entry name" value="Leucine-rich repeat receptor-like serine/threonine/tyrosine-protein kinase SOBIR1"/>
    <property type="match status" value="1"/>
</dbReference>
<dbReference type="FunFam" id="3.30.200.20:FF:000541">
    <property type="entry name" value="leucine-rich repeat receptor-like serine/threonine/tyrosine-protein kinase SOBIR1"/>
    <property type="match status" value="1"/>
</dbReference>
<dbReference type="Gene3D" id="3.30.200.20">
    <property type="entry name" value="Phosphorylase Kinase, domain 1"/>
    <property type="match status" value="1"/>
</dbReference>
<dbReference type="Gene3D" id="3.80.10.10">
    <property type="entry name" value="Ribonuclease Inhibitor"/>
    <property type="match status" value="1"/>
</dbReference>
<dbReference type="Gene3D" id="1.10.510.10">
    <property type="entry name" value="Transferase(Phosphotransferase) domain 1"/>
    <property type="match status" value="1"/>
</dbReference>
<dbReference type="InterPro" id="IPR011009">
    <property type="entry name" value="Kinase-like_dom_sf"/>
</dbReference>
<dbReference type="InterPro" id="IPR001611">
    <property type="entry name" value="Leu-rich_rpt"/>
</dbReference>
<dbReference type="InterPro" id="IPR032675">
    <property type="entry name" value="LRR_dom_sf"/>
</dbReference>
<dbReference type="InterPro" id="IPR050647">
    <property type="entry name" value="Plant_LRR-RLKs"/>
</dbReference>
<dbReference type="InterPro" id="IPR000719">
    <property type="entry name" value="Prot_kinase_dom"/>
</dbReference>
<dbReference type="InterPro" id="IPR008271">
    <property type="entry name" value="Ser/Thr_kinase_AS"/>
</dbReference>
<dbReference type="PANTHER" id="PTHR48056:SF75">
    <property type="entry name" value="LEUCINE-RICH REPEAT RECEPTOR-LIKE SERINE_THREONINE_TYROSINE-PROTEIN KINASE SOBIR1"/>
    <property type="match status" value="1"/>
</dbReference>
<dbReference type="PANTHER" id="PTHR48056">
    <property type="entry name" value="LRR RECEPTOR-LIKE SERINE/THREONINE-PROTEIN KINASE-RELATED"/>
    <property type="match status" value="1"/>
</dbReference>
<dbReference type="Pfam" id="PF00560">
    <property type="entry name" value="LRR_1"/>
    <property type="match status" value="1"/>
</dbReference>
<dbReference type="Pfam" id="PF13855">
    <property type="entry name" value="LRR_8"/>
    <property type="match status" value="1"/>
</dbReference>
<dbReference type="Pfam" id="PF00069">
    <property type="entry name" value="Pkinase"/>
    <property type="match status" value="1"/>
</dbReference>
<dbReference type="SMART" id="SM00220">
    <property type="entry name" value="S_TKc"/>
    <property type="match status" value="1"/>
</dbReference>
<dbReference type="SUPFAM" id="SSF52058">
    <property type="entry name" value="L domain-like"/>
    <property type="match status" value="1"/>
</dbReference>
<dbReference type="SUPFAM" id="SSF56112">
    <property type="entry name" value="Protein kinase-like (PK-like)"/>
    <property type="match status" value="1"/>
</dbReference>
<dbReference type="PROSITE" id="PS51450">
    <property type="entry name" value="LRR"/>
    <property type="match status" value="4"/>
</dbReference>
<dbReference type="PROSITE" id="PS50011">
    <property type="entry name" value="PROTEIN_KINASE_DOM"/>
    <property type="match status" value="1"/>
</dbReference>
<dbReference type="PROSITE" id="PS00108">
    <property type="entry name" value="PROTEIN_KINASE_ST"/>
    <property type="match status" value="1"/>
</dbReference>
<proteinExistence type="evidence at protein level"/>
<protein>
    <recommendedName>
        <fullName>Leucine-rich repeat receptor-like serine/threonine/tyrosine-protein kinase SOBIR1</fullName>
        <ecNumber>2.7.10.1</ecNumber>
        <ecNumber>2.7.11.1</ecNumber>
    </recommendedName>
    <alternativeName>
        <fullName>Protein EVERSHED</fullName>
    </alternativeName>
    <alternativeName>
        <fullName>Protein SUPPRESSOR OF BIR1-1</fullName>
    </alternativeName>
</protein>
<feature type="signal peptide" evidence="1">
    <location>
        <begin position="1"/>
        <end position="31"/>
    </location>
</feature>
<feature type="chain" id="PRO_0000403355" description="Leucine-rich repeat receptor-like serine/threonine/tyrosine-protein kinase SOBIR1">
    <location>
        <begin position="32"/>
        <end position="641"/>
    </location>
</feature>
<feature type="topological domain" description="Extracellular" evidence="1">
    <location>
        <begin position="32"/>
        <end position="284"/>
    </location>
</feature>
<feature type="transmembrane region" description="Helical" evidence="1">
    <location>
        <begin position="285"/>
        <end position="305"/>
    </location>
</feature>
<feature type="topological domain" description="Cytoplasmic" evidence="1">
    <location>
        <begin position="306"/>
        <end position="641"/>
    </location>
</feature>
<feature type="repeat" description="LRR 1">
    <location>
        <begin position="112"/>
        <end position="133"/>
    </location>
</feature>
<feature type="repeat" description="LRR 2">
    <location>
        <begin position="136"/>
        <end position="159"/>
    </location>
</feature>
<feature type="repeat" description="LRR 3">
    <location>
        <begin position="160"/>
        <end position="182"/>
    </location>
</feature>
<feature type="repeat" description="LRR 4">
    <location>
        <begin position="183"/>
        <end position="205"/>
    </location>
</feature>
<feature type="repeat" description="LRR 5">
    <location>
        <begin position="207"/>
        <end position="228"/>
    </location>
</feature>
<feature type="domain" description="Protein kinase" evidence="2">
    <location>
        <begin position="347"/>
        <end position="641"/>
    </location>
</feature>
<feature type="region of interest" description="Disordered" evidence="4">
    <location>
        <begin position="243"/>
        <end position="278"/>
    </location>
</feature>
<feature type="compositionally biased region" description="Polar residues" evidence="4">
    <location>
        <begin position="245"/>
        <end position="259"/>
    </location>
</feature>
<feature type="compositionally biased region" description="Low complexity" evidence="4">
    <location>
        <begin position="260"/>
        <end position="269"/>
    </location>
</feature>
<feature type="active site" description="Proton acceptor" evidence="2 3">
    <location>
        <position position="489"/>
    </location>
</feature>
<feature type="binding site" evidence="2">
    <location>
        <begin position="353"/>
        <end position="361"/>
    </location>
    <ligand>
        <name>ATP</name>
        <dbReference type="ChEBI" id="CHEBI:30616"/>
    </ligand>
</feature>
<feature type="binding site" evidence="2">
    <location>
        <position position="377"/>
    </location>
    <ligand>
        <name>ATP</name>
        <dbReference type="ChEBI" id="CHEBI:30616"/>
    </ligand>
</feature>
<feature type="glycosylation site" description="N-linked (GlcNAc...) asparagine" evidence="1">
    <location>
        <position position="154"/>
    </location>
</feature>
<feature type="glycosylation site" description="N-linked (GlcNAc...) asparagine" evidence="1">
    <location>
        <position position="186"/>
    </location>
</feature>
<feature type="glycosylation site" description="N-linked (GlcNAc...) asparagine" evidence="1">
    <location>
        <position position="256"/>
    </location>
</feature>
<feature type="mutagenesis site" description="In sobir1-8; suppresses BIR1 (bir1-1) disruption phenotype." evidence="5">
    <original>V</original>
    <variation>M</variation>
    <location>
        <position position="129"/>
    </location>
</feature>
<feature type="mutagenesis site" description="In sobir1-4; suppresses BIR1 (bir1-1) disruption phenotype." evidence="5">
    <original>S</original>
    <variation>N</variation>
    <location>
        <position position="329"/>
    </location>
</feature>
<feature type="mutagenesis site" description="In sobir1-7; suppresses BIR1 (bir1-1) disruption phenotype." evidence="5">
    <original>G</original>
    <variation>R</variation>
    <location>
        <position position="356"/>
    </location>
</feature>
<feature type="mutagenesis site" description="Loss of kinase activity." evidence="6">
    <original>K</original>
    <variation>E</variation>
    <location>
        <position position="377"/>
    </location>
</feature>
<feature type="mutagenesis site" description="In evr-2; loss of kinase activity." evidence="6">
    <original>E</original>
    <variation>K</variation>
    <location>
        <position position="407"/>
    </location>
</feature>
<feature type="mutagenesis site" description="In sobir1-9; suppresses BIR1 (bir1-1) disruption phenotype." evidence="5">
    <original>R</original>
    <variation>W</variation>
    <location>
        <position position="417"/>
    </location>
</feature>
<feature type="mutagenesis site" description="In sobir1-10; suppresses BIR1 (bir1-1) disruption phenotype." evidence="5">
    <original>N</original>
    <variation>D</variation>
    <location>
        <position position="455"/>
    </location>
</feature>
<feature type="mutagenesis site" description="In sobir1-5; suppresses BIR1 (bir1-1) disruption phenotype." evidence="5">
    <original>G</original>
    <variation>R</variation>
    <location>
        <position position="557"/>
    </location>
</feature>
<feature type="mutagenesis site" description="In sobir1-2; suppresses BIR1 (bir1-1) disruption phenotype." evidence="5">
    <original>E</original>
    <variation>K</variation>
    <location>
        <position position="575"/>
    </location>
</feature>
<feature type="mutagenesis site" description="In sobir1-6; suppresses BIR1 (bir1-1) disruption phenotype." evidence="5">
    <original>R</original>
    <variation>K</variation>
    <location>
        <position position="626"/>
    </location>
</feature>
<feature type="sequence conflict" description="In Ref. 3; AAL25569." evidence="10" ref="3">
    <original>E</original>
    <variation>V</variation>
    <location>
        <position position="112"/>
    </location>
</feature>
<feature type="sequence conflict" description="In Ref. 3; AAL25569." evidence="10" ref="3">
    <original>L</original>
    <variation>S</variation>
    <location>
        <position position="490"/>
    </location>
</feature>
<feature type="helix" evidence="12">
    <location>
        <begin position="39"/>
        <end position="52"/>
    </location>
</feature>
<feature type="strand" evidence="12">
    <location>
        <begin position="72"/>
        <end position="78"/>
    </location>
</feature>
<feature type="strand" evidence="12">
    <location>
        <begin position="80"/>
        <end position="82"/>
    </location>
</feature>
<feature type="strand" evidence="12">
    <location>
        <begin position="85"/>
        <end position="93"/>
    </location>
</feature>
<feature type="helix" evidence="12">
    <location>
        <begin position="105"/>
        <end position="109"/>
    </location>
</feature>
<feature type="strand" evidence="12">
    <location>
        <begin position="115"/>
        <end position="117"/>
    </location>
</feature>
<feature type="helix" evidence="12">
    <location>
        <begin position="129"/>
        <end position="133"/>
    </location>
</feature>
<feature type="strand" evidence="12">
    <location>
        <begin position="139"/>
        <end position="141"/>
    </location>
</feature>
<feature type="strand" evidence="12">
    <location>
        <begin position="144"/>
        <end position="150"/>
    </location>
</feature>
<feature type="helix" evidence="12">
    <location>
        <begin position="153"/>
        <end position="157"/>
    </location>
</feature>
<feature type="strand" evidence="12">
    <location>
        <begin position="163"/>
        <end position="165"/>
    </location>
</feature>
<feature type="strand" evidence="12">
    <location>
        <begin position="168"/>
        <end position="173"/>
    </location>
</feature>
<feature type="helix" evidence="12">
    <location>
        <begin position="176"/>
        <end position="178"/>
    </location>
</feature>
<feature type="strand" evidence="12">
    <location>
        <begin position="185"/>
        <end position="188"/>
    </location>
</feature>
<feature type="strand" evidence="12">
    <location>
        <begin position="191"/>
        <end position="194"/>
    </location>
</feature>
<feature type="helix" evidence="12">
    <location>
        <begin position="200"/>
        <end position="204"/>
    </location>
</feature>
<feature type="strand" evidence="12">
    <location>
        <begin position="210"/>
        <end position="212"/>
    </location>
</feature>
<feature type="helix" evidence="13">
    <location>
        <begin position="334"/>
        <end position="342"/>
    </location>
</feature>
<feature type="helix" evidence="13">
    <location>
        <begin position="344"/>
        <end position="347"/>
    </location>
</feature>
<feature type="strand" evidence="13">
    <location>
        <begin position="350"/>
        <end position="356"/>
    </location>
</feature>
<feature type="strand" evidence="13">
    <location>
        <begin position="359"/>
        <end position="366"/>
    </location>
</feature>
<feature type="turn" evidence="13">
    <location>
        <begin position="367"/>
        <end position="370"/>
    </location>
</feature>
<feature type="strand" evidence="13">
    <location>
        <begin position="371"/>
        <end position="380"/>
    </location>
</feature>
<feature type="helix" evidence="13">
    <location>
        <begin position="403"/>
        <end position="412"/>
    </location>
</feature>
<feature type="strand" evidence="13">
    <location>
        <begin position="424"/>
        <end position="427"/>
    </location>
</feature>
<feature type="strand" evidence="13">
    <location>
        <begin position="429"/>
        <end position="437"/>
    </location>
</feature>
<feature type="helix" evidence="13">
    <location>
        <begin position="444"/>
        <end position="452"/>
    </location>
</feature>
<feature type="helix" evidence="13">
    <location>
        <begin position="460"/>
        <end position="479"/>
    </location>
</feature>
<feature type="strand" evidence="13">
    <location>
        <begin position="481"/>
        <end position="483"/>
    </location>
</feature>
<feature type="helix" evidence="13">
    <location>
        <begin position="492"/>
        <end position="494"/>
    </location>
</feature>
<feature type="strand" evidence="13">
    <location>
        <begin position="495"/>
        <end position="497"/>
    </location>
</feature>
<feature type="strand" evidence="13">
    <location>
        <begin position="503"/>
        <end position="505"/>
    </location>
</feature>
<feature type="turn" evidence="13">
    <location>
        <begin position="511"/>
        <end position="513"/>
    </location>
</feature>
<feature type="helix" evidence="13">
    <location>
        <begin position="517"/>
        <end position="526"/>
    </location>
</feature>
<feature type="helix" evidence="13">
    <location>
        <begin position="530"/>
        <end position="532"/>
    </location>
</feature>
<feature type="helix" evidence="13">
    <location>
        <begin position="537"/>
        <end position="540"/>
    </location>
</feature>
<feature type="helix" evidence="13">
    <location>
        <begin position="545"/>
        <end position="561"/>
    </location>
</feature>
<feature type="helix" evidence="13">
    <location>
        <begin position="569"/>
        <end position="572"/>
    </location>
</feature>
<feature type="strand" evidence="13">
    <location>
        <begin position="573"/>
        <end position="575"/>
    </location>
</feature>
<feature type="helix" evidence="13">
    <location>
        <begin position="578"/>
        <end position="587"/>
    </location>
</feature>
<feature type="helix" evidence="13">
    <location>
        <begin position="591"/>
        <end position="594"/>
    </location>
</feature>
<feature type="helix" evidence="13">
    <location>
        <begin position="597"/>
        <end position="599"/>
    </location>
</feature>
<feature type="helix" evidence="13">
    <location>
        <begin position="605"/>
        <end position="618"/>
    </location>
</feature>
<feature type="helix" evidence="13">
    <location>
        <begin position="623"/>
        <end position="625"/>
    </location>
</feature>
<feature type="helix" evidence="13">
    <location>
        <begin position="629"/>
        <end position="636"/>
    </location>
</feature>
<gene>
    <name type="primary">SOBIR1</name>
    <name type="synonym">EVR</name>
    <name type="ordered locus">At2g31880</name>
    <name type="ORF">F20M17.8</name>
</gene>
<accession>Q9SKB2</accession>
<accession>Q93Z40</accession>